<name>CF208_HUMAN</name>
<organism>
    <name type="scientific">Homo sapiens</name>
    <name type="common">Human</name>
    <dbReference type="NCBI Taxonomy" id="9606"/>
    <lineage>
        <taxon>Eukaryota</taxon>
        <taxon>Metazoa</taxon>
        <taxon>Chordata</taxon>
        <taxon>Craniata</taxon>
        <taxon>Vertebrata</taxon>
        <taxon>Euteleostomi</taxon>
        <taxon>Mammalia</taxon>
        <taxon>Eutheria</taxon>
        <taxon>Euarchontoglires</taxon>
        <taxon>Primates</taxon>
        <taxon>Haplorrhini</taxon>
        <taxon>Catarrhini</taxon>
        <taxon>Hominidae</taxon>
        <taxon>Homo</taxon>
    </lineage>
</organism>
<sequence length="128" mass="13648">MSLCSACTSPASHQLLLNCQGQTVAKSHSSADAGVSLVSGRWCAWWPEHCSESMFPSQHPVLSSNLADSSGQGRSPAGAHPALCPFHKSPWFPHFPQILPREWSWCGPERPAGCSLGLKAEAALVGKK</sequence>
<accession>Q9H8X3</accession>
<accession>Q495C5</accession>
<reference key="1">
    <citation type="journal article" date="2004" name="Nat. Genet.">
        <title>Complete sequencing and characterization of 21,243 full-length human cDNAs.</title>
        <authorList>
            <person name="Ota T."/>
            <person name="Suzuki Y."/>
            <person name="Nishikawa T."/>
            <person name="Otsuki T."/>
            <person name="Sugiyama T."/>
            <person name="Irie R."/>
            <person name="Wakamatsu A."/>
            <person name="Hayashi K."/>
            <person name="Sato H."/>
            <person name="Nagai K."/>
            <person name="Kimura K."/>
            <person name="Makita H."/>
            <person name="Sekine M."/>
            <person name="Obayashi M."/>
            <person name="Nishi T."/>
            <person name="Shibahara T."/>
            <person name="Tanaka T."/>
            <person name="Ishii S."/>
            <person name="Yamamoto J."/>
            <person name="Saito K."/>
            <person name="Kawai Y."/>
            <person name="Isono Y."/>
            <person name="Nakamura Y."/>
            <person name="Nagahari K."/>
            <person name="Murakami K."/>
            <person name="Yasuda T."/>
            <person name="Iwayanagi T."/>
            <person name="Wagatsuma M."/>
            <person name="Shiratori A."/>
            <person name="Sudo H."/>
            <person name="Hosoiri T."/>
            <person name="Kaku Y."/>
            <person name="Kodaira H."/>
            <person name="Kondo H."/>
            <person name="Sugawara M."/>
            <person name="Takahashi M."/>
            <person name="Kanda K."/>
            <person name="Yokoi T."/>
            <person name="Furuya T."/>
            <person name="Kikkawa E."/>
            <person name="Omura Y."/>
            <person name="Abe K."/>
            <person name="Kamihara K."/>
            <person name="Katsuta N."/>
            <person name="Sato K."/>
            <person name="Tanikawa M."/>
            <person name="Yamazaki M."/>
            <person name="Ninomiya K."/>
            <person name="Ishibashi T."/>
            <person name="Yamashita H."/>
            <person name="Murakawa K."/>
            <person name="Fujimori K."/>
            <person name="Tanai H."/>
            <person name="Kimata M."/>
            <person name="Watanabe M."/>
            <person name="Hiraoka S."/>
            <person name="Chiba Y."/>
            <person name="Ishida S."/>
            <person name="Ono Y."/>
            <person name="Takiguchi S."/>
            <person name="Watanabe S."/>
            <person name="Yosida M."/>
            <person name="Hotuta T."/>
            <person name="Kusano J."/>
            <person name="Kanehori K."/>
            <person name="Takahashi-Fujii A."/>
            <person name="Hara H."/>
            <person name="Tanase T.-O."/>
            <person name="Nomura Y."/>
            <person name="Togiya S."/>
            <person name="Komai F."/>
            <person name="Hara R."/>
            <person name="Takeuchi K."/>
            <person name="Arita M."/>
            <person name="Imose N."/>
            <person name="Musashino K."/>
            <person name="Yuuki H."/>
            <person name="Oshima A."/>
            <person name="Sasaki N."/>
            <person name="Aotsuka S."/>
            <person name="Yoshikawa Y."/>
            <person name="Matsunawa H."/>
            <person name="Ichihara T."/>
            <person name="Shiohata N."/>
            <person name="Sano S."/>
            <person name="Moriya S."/>
            <person name="Momiyama H."/>
            <person name="Satoh N."/>
            <person name="Takami S."/>
            <person name="Terashima Y."/>
            <person name="Suzuki O."/>
            <person name="Nakagawa S."/>
            <person name="Senoh A."/>
            <person name="Mizoguchi H."/>
            <person name="Goto Y."/>
            <person name="Shimizu F."/>
            <person name="Wakebe H."/>
            <person name="Hishigaki H."/>
            <person name="Watanabe T."/>
            <person name="Sugiyama A."/>
            <person name="Takemoto M."/>
            <person name="Kawakami B."/>
            <person name="Yamazaki M."/>
            <person name="Watanabe K."/>
            <person name="Kumagai A."/>
            <person name="Itakura S."/>
            <person name="Fukuzumi Y."/>
            <person name="Fujimori Y."/>
            <person name="Komiyama M."/>
            <person name="Tashiro H."/>
            <person name="Tanigami A."/>
            <person name="Fujiwara T."/>
            <person name="Ono T."/>
            <person name="Yamada K."/>
            <person name="Fujii Y."/>
            <person name="Ozaki K."/>
            <person name="Hirao M."/>
            <person name="Ohmori Y."/>
            <person name="Kawabata A."/>
            <person name="Hikiji T."/>
            <person name="Kobatake N."/>
            <person name="Inagaki H."/>
            <person name="Ikema Y."/>
            <person name="Okamoto S."/>
            <person name="Okitani R."/>
            <person name="Kawakami T."/>
            <person name="Noguchi S."/>
            <person name="Itoh T."/>
            <person name="Shigeta K."/>
            <person name="Senba T."/>
            <person name="Matsumura K."/>
            <person name="Nakajima Y."/>
            <person name="Mizuno T."/>
            <person name="Morinaga M."/>
            <person name="Sasaki M."/>
            <person name="Togashi T."/>
            <person name="Oyama M."/>
            <person name="Hata H."/>
            <person name="Watanabe M."/>
            <person name="Komatsu T."/>
            <person name="Mizushima-Sugano J."/>
            <person name="Satoh T."/>
            <person name="Shirai Y."/>
            <person name="Takahashi Y."/>
            <person name="Nakagawa K."/>
            <person name="Okumura K."/>
            <person name="Nagase T."/>
            <person name="Nomura N."/>
            <person name="Kikuchi H."/>
            <person name="Masuho Y."/>
            <person name="Yamashita R."/>
            <person name="Nakai K."/>
            <person name="Yada T."/>
            <person name="Nakamura Y."/>
            <person name="Ohara O."/>
            <person name="Isogai T."/>
            <person name="Sugano S."/>
        </authorList>
    </citation>
    <scope>NUCLEOTIDE SEQUENCE [LARGE SCALE MRNA]</scope>
</reference>
<reference key="2">
    <citation type="journal article" date="2003" name="Nature">
        <title>The DNA sequence and analysis of human chromosome 6.</title>
        <authorList>
            <person name="Mungall A.J."/>
            <person name="Palmer S.A."/>
            <person name="Sims S.K."/>
            <person name="Edwards C.A."/>
            <person name="Ashurst J.L."/>
            <person name="Wilming L."/>
            <person name="Jones M.C."/>
            <person name="Horton R."/>
            <person name="Hunt S.E."/>
            <person name="Scott C.E."/>
            <person name="Gilbert J.G.R."/>
            <person name="Clamp M.E."/>
            <person name="Bethel G."/>
            <person name="Milne S."/>
            <person name="Ainscough R."/>
            <person name="Almeida J.P."/>
            <person name="Ambrose K.D."/>
            <person name="Andrews T.D."/>
            <person name="Ashwell R.I.S."/>
            <person name="Babbage A.K."/>
            <person name="Bagguley C.L."/>
            <person name="Bailey J."/>
            <person name="Banerjee R."/>
            <person name="Barker D.J."/>
            <person name="Barlow K.F."/>
            <person name="Bates K."/>
            <person name="Beare D.M."/>
            <person name="Beasley H."/>
            <person name="Beasley O."/>
            <person name="Bird C.P."/>
            <person name="Blakey S.E."/>
            <person name="Bray-Allen S."/>
            <person name="Brook J."/>
            <person name="Brown A.J."/>
            <person name="Brown J.Y."/>
            <person name="Burford D.C."/>
            <person name="Burrill W."/>
            <person name="Burton J."/>
            <person name="Carder C."/>
            <person name="Carter N.P."/>
            <person name="Chapman J.C."/>
            <person name="Clark S.Y."/>
            <person name="Clark G."/>
            <person name="Clee C.M."/>
            <person name="Clegg S."/>
            <person name="Cobley V."/>
            <person name="Collier R.E."/>
            <person name="Collins J.E."/>
            <person name="Colman L.K."/>
            <person name="Corby N.R."/>
            <person name="Coville G.J."/>
            <person name="Culley K.M."/>
            <person name="Dhami P."/>
            <person name="Davies J."/>
            <person name="Dunn M."/>
            <person name="Earthrowl M.E."/>
            <person name="Ellington A.E."/>
            <person name="Evans K.A."/>
            <person name="Faulkner L."/>
            <person name="Francis M.D."/>
            <person name="Frankish A."/>
            <person name="Frankland J."/>
            <person name="French L."/>
            <person name="Garner P."/>
            <person name="Garnett J."/>
            <person name="Ghori M.J."/>
            <person name="Gilby L.M."/>
            <person name="Gillson C.J."/>
            <person name="Glithero R.J."/>
            <person name="Grafham D.V."/>
            <person name="Grant M."/>
            <person name="Gribble S."/>
            <person name="Griffiths C."/>
            <person name="Griffiths M.N.D."/>
            <person name="Hall R."/>
            <person name="Halls K.S."/>
            <person name="Hammond S."/>
            <person name="Harley J.L."/>
            <person name="Hart E.A."/>
            <person name="Heath P.D."/>
            <person name="Heathcott R."/>
            <person name="Holmes S.J."/>
            <person name="Howden P.J."/>
            <person name="Howe K.L."/>
            <person name="Howell G.R."/>
            <person name="Huckle E."/>
            <person name="Humphray S.J."/>
            <person name="Humphries M.D."/>
            <person name="Hunt A.R."/>
            <person name="Johnson C.M."/>
            <person name="Joy A.A."/>
            <person name="Kay M."/>
            <person name="Keenan S.J."/>
            <person name="Kimberley A.M."/>
            <person name="King A."/>
            <person name="Laird G.K."/>
            <person name="Langford C."/>
            <person name="Lawlor S."/>
            <person name="Leongamornlert D.A."/>
            <person name="Leversha M."/>
            <person name="Lloyd C.R."/>
            <person name="Lloyd D.M."/>
            <person name="Loveland J.E."/>
            <person name="Lovell J."/>
            <person name="Martin S."/>
            <person name="Mashreghi-Mohammadi M."/>
            <person name="Maslen G.L."/>
            <person name="Matthews L."/>
            <person name="McCann O.T."/>
            <person name="McLaren S.J."/>
            <person name="McLay K."/>
            <person name="McMurray A."/>
            <person name="Moore M.J.F."/>
            <person name="Mullikin J.C."/>
            <person name="Niblett D."/>
            <person name="Nickerson T."/>
            <person name="Novik K.L."/>
            <person name="Oliver K."/>
            <person name="Overton-Larty E.K."/>
            <person name="Parker A."/>
            <person name="Patel R."/>
            <person name="Pearce A.V."/>
            <person name="Peck A.I."/>
            <person name="Phillimore B.J.C.T."/>
            <person name="Phillips S."/>
            <person name="Plumb R.W."/>
            <person name="Porter K.M."/>
            <person name="Ramsey Y."/>
            <person name="Ranby S.A."/>
            <person name="Rice C.M."/>
            <person name="Ross M.T."/>
            <person name="Searle S.M."/>
            <person name="Sehra H.K."/>
            <person name="Sheridan E."/>
            <person name="Skuce C.D."/>
            <person name="Smith S."/>
            <person name="Smith M."/>
            <person name="Spraggon L."/>
            <person name="Squares S.L."/>
            <person name="Steward C.A."/>
            <person name="Sycamore N."/>
            <person name="Tamlyn-Hall G."/>
            <person name="Tester J."/>
            <person name="Theaker A.J."/>
            <person name="Thomas D.W."/>
            <person name="Thorpe A."/>
            <person name="Tracey A."/>
            <person name="Tromans A."/>
            <person name="Tubby B."/>
            <person name="Wall M."/>
            <person name="Wallis J.M."/>
            <person name="West A.P."/>
            <person name="White S.S."/>
            <person name="Whitehead S.L."/>
            <person name="Whittaker H."/>
            <person name="Wild A."/>
            <person name="Willey D.J."/>
            <person name="Wilmer T.E."/>
            <person name="Wood J.M."/>
            <person name="Wray P.W."/>
            <person name="Wyatt J.C."/>
            <person name="Young L."/>
            <person name="Younger R.M."/>
            <person name="Bentley D.R."/>
            <person name="Coulson A."/>
            <person name="Durbin R.M."/>
            <person name="Hubbard T."/>
            <person name="Sulston J.E."/>
            <person name="Dunham I."/>
            <person name="Rogers J."/>
            <person name="Beck S."/>
        </authorList>
    </citation>
    <scope>NUCLEOTIDE SEQUENCE [LARGE SCALE GENOMIC DNA]</scope>
</reference>
<reference key="3">
    <citation type="journal article" date="2004" name="Genome Res.">
        <title>The status, quality, and expansion of the NIH full-length cDNA project: the Mammalian Gene Collection (MGC).</title>
        <authorList>
            <consortium name="The MGC Project Team"/>
        </authorList>
    </citation>
    <scope>NUCLEOTIDE SEQUENCE [LARGE SCALE MRNA]</scope>
</reference>
<gene>
    <name type="primary">LINC00574</name>
    <name type="synonym">C6orf208</name>
</gene>
<dbReference type="EMBL" id="AK023224">
    <property type="protein sequence ID" value="BAB14475.1"/>
    <property type="molecule type" value="mRNA"/>
</dbReference>
<dbReference type="EMBL" id="AL354892">
    <property type="status" value="NOT_ANNOTATED_CDS"/>
    <property type="molecule type" value="Genomic_DNA"/>
</dbReference>
<dbReference type="EMBL" id="BC101251">
    <property type="status" value="NOT_ANNOTATED_CDS"/>
    <property type="molecule type" value="mRNA"/>
</dbReference>
<dbReference type="EMBL" id="BC101252">
    <property type="status" value="NOT_ANNOTATED_CDS"/>
    <property type="molecule type" value="mRNA"/>
</dbReference>
<dbReference type="EMBL" id="BC101253">
    <property type="status" value="NOT_ANNOTATED_CDS"/>
    <property type="molecule type" value="mRNA"/>
</dbReference>
<dbReference type="GlyGen" id="Q9H8X3">
    <property type="glycosylation" value="1 site, 1 O-linked glycan (1 site)"/>
</dbReference>
<dbReference type="BioMuta" id="HGNC:21598"/>
<dbReference type="AGR" id="HGNC:21598"/>
<dbReference type="GeneCards" id="LINC00574"/>
<dbReference type="HGNC" id="HGNC:21598">
    <property type="gene designation" value="LINC00574"/>
</dbReference>
<dbReference type="neXtProt" id="NX_Q9H8X3"/>
<dbReference type="InParanoid" id="Q9H8X3"/>
<dbReference type="PAN-GO" id="Q9H8X3">
    <property type="GO annotations" value="0 GO annotations based on evolutionary models"/>
</dbReference>
<dbReference type="PathwayCommons" id="Q9H8X3"/>
<dbReference type="Pharos" id="Q9H8X3">
    <property type="development level" value="Tdark"/>
</dbReference>
<dbReference type="Proteomes" id="UP000005640">
    <property type="component" value="Unplaced"/>
</dbReference>
<dbReference type="RNAct" id="Q9H8X3">
    <property type="molecule type" value="protein"/>
</dbReference>
<evidence type="ECO:0000305" key="1"/>
<comment type="caution">
    <text evidence="1">Product of a dubious gene prediction.</text>
</comment>
<feature type="chain" id="PRO_0000089563" description="Putative uncharacterized protein LINC00574">
    <location>
        <begin position="1"/>
        <end position="128"/>
    </location>
</feature>
<feature type="sequence variant" id="VAR_033682" description="In dbSNP:rs6926145.">
    <original>S</original>
    <variation>C</variation>
    <location>
        <position position="27"/>
    </location>
</feature>
<feature type="sequence variant" id="VAR_024304" description="In dbSNP:rs1078211.">
    <original>W</original>
    <variation>R</variation>
    <location>
        <position position="91"/>
    </location>
</feature>
<feature type="sequence variant" id="VAR_024305" description="In dbSNP:rs1078208.">
    <original>K</original>
    <variation>R</variation>
    <location>
        <position position="119"/>
    </location>
</feature>
<protein>
    <recommendedName>
        <fullName>Putative uncharacterized protein LINC00574</fullName>
    </recommendedName>
</protein>
<proteinExistence type="uncertain"/>
<keyword id="KW-1185">Reference proteome</keyword>